<keyword id="KW-0067">ATP-binding</keyword>
<keyword id="KW-0131">Cell cycle</keyword>
<keyword id="KW-0132">Cell division</keyword>
<keyword id="KW-0133">Cell shape</keyword>
<keyword id="KW-0961">Cell wall biogenesis/degradation</keyword>
<keyword id="KW-0963">Cytoplasm</keyword>
<keyword id="KW-0436">Ligase</keyword>
<keyword id="KW-0547">Nucleotide-binding</keyword>
<keyword id="KW-0573">Peptidoglycan synthesis</keyword>
<keyword id="KW-1185">Reference proteome</keyword>
<reference key="1">
    <citation type="journal article" date="2003" name="Nature">
        <title>Genome divergence in two Prochlorococcus ecotypes reflects oceanic niche differentiation.</title>
        <authorList>
            <person name="Rocap G."/>
            <person name="Larimer F.W."/>
            <person name="Lamerdin J.E."/>
            <person name="Malfatti S."/>
            <person name="Chain P."/>
            <person name="Ahlgren N.A."/>
            <person name="Arellano A."/>
            <person name="Coleman M."/>
            <person name="Hauser L."/>
            <person name="Hess W.R."/>
            <person name="Johnson Z.I."/>
            <person name="Land M.L."/>
            <person name="Lindell D."/>
            <person name="Post A.F."/>
            <person name="Regala W."/>
            <person name="Shah M."/>
            <person name="Shaw S.L."/>
            <person name="Steglich C."/>
            <person name="Sullivan M.B."/>
            <person name="Ting C.S."/>
            <person name="Tolonen A."/>
            <person name="Webb E.A."/>
            <person name="Zinser E.R."/>
            <person name="Chisholm S.W."/>
        </authorList>
    </citation>
    <scope>NUCLEOTIDE SEQUENCE [LARGE SCALE GENOMIC DNA]</scope>
    <source>
        <strain>MIT 9313</strain>
    </source>
</reference>
<sequence length="488" mass="52801">MSLWFCPLTSTLNRQQPIHFIGVGGIGMSALALILVNRGHIVSGSDSRENTAVEQLRAQGVRVFRDQSAANIDAICSNVDLLPLVVISTAIPKSNPELKAAKLSQLKILHRSDLLAALIQAQPSIAVAGSHGKTTTSTLLTTLLATTDQDPTAVIGGVVPYYDSNGHVGKGRLLVAEADESDGSLVKFQATLGVITNLELDHTDHYANLDELINTMKRFGQGCRRLLANFDCPILKEHFDATAWWSVKTSAGVDFAALPICLNGDQTIADIYEQGKRMGQITLPMPGLHNLSNAMAAIAACRLEGLSFEDVQQGLADLQPPGRRFDFRGTWEGRQIVDDYAHHPSEVSATLTMARLIVTSGRSQLPNPPKRILAVFQPHRYSRTNKFLYDFARALGEADAVLLAPVYSAGENPIQGATSESLAKAIRIQHPNLPVAVAENFNQLTLLVQKHSLKGDLVLAMGAGNINNLWRQLTHLDNAKRCPPSLAA</sequence>
<organism>
    <name type="scientific">Prochlorococcus marinus (strain MIT 9313)</name>
    <dbReference type="NCBI Taxonomy" id="74547"/>
    <lineage>
        <taxon>Bacteria</taxon>
        <taxon>Bacillati</taxon>
        <taxon>Cyanobacteriota</taxon>
        <taxon>Cyanophyceae</taxon>
        <taxon>Synechococcales</taxon>
        <taxon>Prochlorococcaceae</taxon>
        <taxon>Prochlorococcus</taxon>
    </lineage>
</organism>
<comment type="function">
    <text evidence="1">Cell wall formation.</text>
</comment>
<comment type="catalytic activity">
    <reaction evidence="1">
        <text>UDP-N-acetyl-alpha-D-muramate + L-alanine + ATP = UDP-N-acetyl-alpha-D-muramoyl-L-alanine + ADP + phosphate + H(+)</text>
        <dbReference type="Rhea" id="RHEA:23372"/>
        <dbReference type="ChEBI" id="CHEBI:15378"/>
        <dbReference type="ChEBI" id="CHEBI:30616"/>
        <dbReference type="ChEBI" id="CHEBI:43474"/>
        <dbReference type="ChEBI" id="CHEBI:57972"/>
        <dbReference type="ChEBI" id="CHEBI:70757"/>
        <dbReference type="ChEBI" id="CHEBI:83898"/>
        <dbReference type="ChEBI" id="CHEBI:456216"/>
        <dbReference type="EC" id="6.3.2.8"/>
    </reaction>
</comment>
<comment type="pathway">
    <text evidence="1">Cell wall biogenesis; peptidoglycan biosynthesis.</text>
</comment>
<comment type="subcellular location">
    <subcellularLocation>
        <location evidence="1">Cytoplasm</location>
    </subcellularLocation>
</comment>
<comment type="similarity">
    <text evidence="1">Belongs to the MurCDEF family.</text>
</comment>
<proteinExistence type="inferred from homology"/>
<accession>Q7V9C3</accession>
<gene>
    <name evidence="1" type="primary">murC</name>
    <name type="ordered locus">PMT_0027</name>
</gene>
<dbReference type="EC" id="6.3.2.8" evidence="1"/>
<dbReference type="EMBL" id="BX548175">
    <property type="protein sequence ID" value="CAE20202.1"/>
    <property type="molecule type" value="Genomic_DNA"/>
</dbReference>
<dbReference type="RefSeq" id="WP_011129406.1">
    <property type="nucleotide sequence ID" value="NC_005071.1"/>
</dbReference>
<dbReference type="SMR" id="Q7V9C3"/>
<dbReference type="KEGG" id="pmt:PMT_0027"/>
<dbReference type="eggNOG" id="COG0773">
    <property type="taxonomic scope" value="Bacteria"/>
</dbReference>
<dbReference type="HOGENOM" id="CLU_028104_2_2_3"/>
<dbReference type="OrthoDB" id="9804126at2"/>
<dbReference type="UniPathway" id="UPA00219"/>
<dbReference type="Proteomes" id="UP000001423">
    <property type="component" value="Chromosome"/>
</dbReference>
<dbReference type="GO" id="GO:0005737">
    <property type="term" value="C:cytoplasm"/>
    <property type="evidence" value="ECO:0007669"/>
    <property type="project" value="UniProtKB-SubCell"/>
</dbReference>
<dbReference type="GO" id="GO:0005524">
    <property type="term" value="F:ATP binding"/>
    <property type="evidence" value="ECO:0007669"/>
    <property type="project" value="UniProtKB-UniRule"/>
</dbReference>
<dbReference type="GO" id="GO:0008763">
    <property type="term" value="F:UDP-N-acetylmuramate-L-alanine ligase activity"/>
    <property type="evidence" value="ECO:0007669"/>
    <property type="project" value="UniProtKB-UniRule"/>
</dbReference>
<dbReference type="GO" id="GO:0051301">
    <property type="term" value="P:cell division"/>
    <property type="evidence" value="ECO:0007669"/>
    <property type="project" value="UniProtKB-KW"/>
</dbReference>
<dbReference type="GO" id="GO:0071555">
    <property type="term" value="P:cell wall organization"/>
    <property type="evidence" value="ECO:0007669"/>
    <property type="project" value="UniProtKB-KW"/>
</dbReference>
<dbReference type="GO" id="GO:0009252">
    <property type="term" value="P:peptidoglycan biosynthetic process"/>
    <property type="evidence" value="ECO:0007669"/>
    <property type="project" value="UniProtKB-UniRule"/>
</dbReference>
<dbReference type="GO" id="GO:0008360">
    <property type="term" value="P:regulation of cell shape"/>
    <property type="evidence" value="ECO:0007669"/>
    <property type="project" value="UniProtKB-KW"/>
</dbReference>
<dbReference type="Gene3D" id="3.90.190.20">
    <property type="entry name" value="Mur ligase, C-terminal domain"/>
    <property type="match status" value="1"/>
</dbReference>
<dbReference type="Gene3D" id="3.40.1190.10">
    <property type="entry name" value="Mur-like, catalytic domain"/>
    <property type="match status" value="1"/>
</dbReference>
<dbReference type="Gene3D" id="3.40.50.720">
    <property type="entry name" value="NAD(P)-binding Rossmann-like Domain"/>
    <property type="match status" value="1"/>
</dbReference>
<dbReference type="HAMAP" id="MF_00046">
    <property type="entry name" value="MurC"/>
    <property type="match status" value="1"/>
</dbReference>
<dbReference type="InterPro" id="IPR036565">
    <property type="entry name" value="Mur-like_cat_sf"/>
</dbReference>
<dbReference type="InterPro" id="IPR004101">
    <property type="entry name" value="Mur_ligase_C"/>
</dbReference>
<dbReference type="InterPro" id="IPR036615">
    <property type="entry name" value="Mur_ligase_C_dom_sf"/>
</dbReference>
<dbReference type="InterPro" id="IPR013221">
    <property type="entry name" value="Mur_ligase_cen"/>
</dbReference>
<dbReference type="InterPro" id="IPR000713">
    <property type="entry name" value="Mur_ligase_N"/>
</dbReference>
<dbReference type="InterPro" id="IPR050061">
    <property type="entry name" value="MurCDEF_pg_biosynth"/>
</dbReference>
<dbReference type="InterPro" id="IPR005758">
    <property type="entry name" value="UDP-N-AcMur_Ala_ligase_MurC"/>
</dbReference>
<dbReference type="NCBIfam" id="TIGR01082">
    <property type="entry name" value="murC"/>
    <property type="match status" value="1"/>
</dbReference>
<dbReference type="PANTHER" id="PTHR43445:SF3">
    <property type="entry name" value="UDP-N-ACETYLMURAMATE--L-ALANINE LIGASE"/>
    <property type="match status" value="1"/>
</dbReference>
<dbReference type="PANTHER" id="PTHR43445">
    <property type="entry name" value="UDP-N-ACETYLMURAMATE--L-ALANINE LIGASE-RELATED"/>
    <property type="match status" value="1"/>
</dbReference>
<dbReference type="Pfam" id="PF01225">
    <property type="entry name" value="Mur_ligase"/>
    <property type="match status" value="1"/>
</dbReference>
<dbReference type="Pfam" id="PF02875">
    <property type="entry name" value="Mur_ligase_C"/>
    <property type="match status" value="1"/>
</dbReference>
<dbReference type="Pfam" id="PF08245">
    <property type="entry name" value="Mur_ligase_M"/>
    <property type="match status" value="1"/>
</dbReference>
<dbReference type="SUPFAM" id="SSF51984">
    <property type="entry name" value="MurCD N-terminal domain"/>
    <property type="match status" value="1"/>
</dbReference>
<dbReference type="SUPFAM" id="SSF53623">
    <property type="entry name" value="MurD-like peptide ligases, catalytic domain"/>
    <property type="match status" value="1"/>
</dbReference>
<dbReference type="SUPFAM" id="SSF53244">
    <property type="entry name" value="MurD-like peptide ligases, peptide-binding domain"/>
    <property type="match status" value="1"/>
</dbReference>
<evidence type="ECO:0000255" key="1">
    <source>
        <dbReference type="HAMAP-Rule" id="MF_00046"/>
    </source>
</evidence>
<name>MURC_PROMM</name>
<protein>
    <recommendedName>
        <fullName evidence="1">UDP-N-acetylmuramate--L-alanine ligase</fullName>
        <ecNumber evidence="1">6.3.2.8</ecNumber>
    </recommendedName>
    <alternativeName>
        <fullName evidence="1">UDP-N-acetylmuramoyl-L-alanine synthetase</fullName>
    </alternativeName>
</protein>
<feature type="chain" id="PRO_0000182132" description="UDP-N-acetylmuramate--L-alanine ligase">
    <location>
        <begin position="1"/>
        <end position="488"/>
    </location>
</feature>
<feature type="binding site" evidence="1">
    <location>
        <begin position="129"/>
        <end position="135"/>
    </location>
    <ligand>
        <name>ATP</name>
        <dbReference type="ChEBI" id="CHEBI:30616"/>
    </ligand>
</feature>